<feature type="chain" id="PRO_0000451916" description="FAD-dependent monooxygenase sdcF">
    <location>
        <begin position="1"/>
        <end position="479"/>
    </location>
</feature>
<feature type="domain" description="FAD-binding PCMH-type" evidence="2">
    <location>
        <begin position="40"/>
        <end position="213"/>
    </location>
</feature>
<feature type="modified residue" description="Pros-8alpha-FAD histidine" evidence="1">
    <location>
        <position position="79"/>
    </location>
</feature>
<gene>
    <name evidence="4" type="primary">sdcF</name>
    <name type="ORF">AN1787</name>
    <name type="ORF">ANIA_01787</name>
</gene>
<sequence length="479" mass="52411">MATVSELCCAALNTSIGNRIAFPGSTAYNESLSSYFGVNAQLPPSCFVLPLSAQDVSVAVQTLTSQPDPCFFAIRSGGHTTSLGASAIEAGVTMDLSGMNTTTYDSSTNTAFIQPGARWGSVYETLLRDNVLVPGGRTASVGVGGYLTGGRNSFHAARVGLACLSIKGYEIVLADGEVAKVDQDSHPNLFRALKGGSNNFGIVTLFDMEAFSTEGTIWGGTVLYDISTKDQYIAAGTAFTDNIPNDPYASWVGMFAYNSTTDQTAIFTSLAYTRPVQSWPQAFSEFYAIPNITHTLRSATVLDLAVENSFPYGYRNVLQTGTYSNNAEIIQKAVIILNNQVKMAKLRARGKDYALFAIVQPWVPLFWEHSEARGGDVLGLERFETNLLNIAWDYSWDNSADDELLYELAQSAREQLDEYARSTGAYNEYIYLNYAGRTQDPLRGYGLENLEFLRRVSEKFDPDGVFQRLVRGGFKIDRA</sequence>
<comment type="function">
    <text evidence="3">FAD-dependent monooxygenase; part of the gene cluster that mediates the biosynthesis of the polyenes aspernidgulenes (PubMed:30302871). The carbon backbone of aspernidgulenes is synthesized by the HR-PKS sdgA, which accepts acetyl-CoA as the starter unit and performs malonyl-CoA extensions as well as regioselective methylation and reduction (PubMed:30302871). The resulting nonaketide offloads the HR-PKS by intramolecular lactonization to yield the 5,6-dihydro-alpha-pyrone-containing hexaenoic acids preaspernidgulene A1 and A2 (PubMed:30302871). The FAD-dependent monooxygenase sdgC then installs the first epoxide on the penultimate double bond (PubMed:30302871). Subsequently, the FAD-dependent monooxygenase sdgF presumably generates a ketone intermediate through Meinwald rearrangement involving a hydride shift (PubMed:30302871). Next, sdgC introduces another epoxide on the last olefin of the ketone intermediate after E/Z isomerization (PubMed:30302871). The epoxide hydrolase sdgD then catalyzes stereospecific cyclization of the 5,6-dihydro-alpha-pyrone and opening of the epoxide ring to form an oxygenated trimethylcyclopentanone and an oxabicyclo[2.2.1]heptane unit (PubMed:30302871). Finally, the bicyclic unit undergoes hydrolytic cleavage, either spontaneously or catalyzed by sdgD, to assemble the dimethyl-gamma-lactone moiety in aspernidgulene A1 (PubMed:30302871).</text>
</comment>
<comment type="cofactor">
    <cofactor evidence="5">
        <name>FAD</name>
        <dbReference type="ChEBI" id="CHEBI:57692"/>
    </cofactor>
</comment>
<comment type="pathway">
    <text evidence="3">Secondary metabolite biosynthesis.</text>
</comment>
<comment type="similarity">
    <text evidence="5">Belongs to the oxygen-dependent FAD-linked oxidoreductase family.</text>
</comment>
<comment type="sequence caution" evidence="5">
    <conflict type="erroneous gene model prediction">
        <sequence resource="EMBL-CDS" id="EAA63963"/>
    </conflict>
</comment>
<accession>C8VPE5</accession>
<accession>Q5BCE3</accession>
<proteinExistence type="evidence at protein level"/>
<name>SDCF_EMENI</name>
<evidence type="ECO:0000250" key="1">
    <source>
        <dbReference type="UniProtKB" id="P08159"/>
    </source>
</evidence>
<evidence type="ECO:0000255" key="2">
    <source>
        <dbReference type="PROSITE-ProRule" id="PRU00718"/>
    </source>
</evidence>
<evidence type="ECO:0000269" key="3">
    <source>
    </source>
</evidence>
<evidence type="ECO:0000303" key="4">
    <source>
    </source>
</evidence>
<evidence type="ECO:0000305" key="5"/>
<protein>
    <recommendedName>
        <fullName evidence="4">FAD-dependent monooxygenase sdcF</fullName>
        <ecNumber evidence="3">1.-.-.-</ecNumber>
    </recommendedName>
    <alternativeName>
        <fullName evidence="4">Aspernidgulenes biosynthesis cluster protein F</fullName>
    </alternativeName>
</protein>
<dbReference type="EC" id="1.-.-.-" evidence="3"/>
<dbReference type="EMBL" id="AACD01000028">
    <property type="protein sequence ID" value="EAA63963.1"/>
    <property type="status" value="ALT_SEQ"/>
    <property type="molecule type" value="Genomic_DNA"/>
</dbReference>
<dbReference type="EMBL" id="BN001307">
    <property type="protein sequence ID" value="CBF85560.1"/>
    <property type="molecule type" value="Genomic_DNA"/>
</dbReference>
<dbReference type="RefSeq" id="XP_659391.1">
    <property type="nucleotide sequence ID" value="XM_654299.1"/>
</dbReference>
<dbReference type="SMR" id="C8VPE5"/>
<dbReference type="STRING" id="227321.C8VPE5"/>
<dbReference type="EnsemblFungi" id="CBF85560">
    <property type="protein sequence ID" value="CBF85560"/>
    <property type="gene ID" value="ANIA_01787"/>
</dbReference>
<dbReference type="GeneID" id="2875166"/>
<dbReference type="KEGG" id="ani:ANIA_01787"/>
<dbReference type="VEuPathDB" id="FungiDB:AN1787"/>
<dbReference type="eggNOG" id="KOG1231">
    <property type="taxonomic scope" value="Eukaryota"/>
</dbReference>
<dbReference type="HOGENOM" id="CLU_018354_1_2_1"/>
<dbReference type="InParanoid" id="C8VPE5"/>
<dbReference type="OMA" id="LCLYQPY"/>
<dbReference type="OrthoDB" id="2151789at2759"/>
<dbReference type="Proteomes" id="UP000000560">
    <property type="component" value="Chromosome VII"/>
</dbReference>
<dbReference type="GO" id="GO:0071949">
    <property type="term" value="F:FAD binding"/>
    <property type="evidence" value="ECO:0007669"/>
    <property type="project" value="InterPro"/>
</dbReference>
<dbReference type="GO" id="GO:0016491">
    <property type="term" value="F:oxidoreductase activity"/>
    <property type="evidence" value="ECO:0007669"/>
    <property type="project" value="UniProtKB-KW"/>
</dbReference>
<dbReference type="Gene3D" id="3.30.465.10">
    <property type="match status" value="1"/>
</dbReference>
<dbReference type="InterPro" id="IPR016166">
    <property type="entry name" value="FAD-bd_PCMH"/>
</dbReference>
<dbReference type="InterPro" id="IPR036318">
    <property type="entry name" value="FAD-bd_PCMH-like_sf"/>
</dbReference>
<dbReference type="InterPro" id="IPR016169">
    <property type="entry name" value="FAD-bd_PCMH_sub2"/>
</dbReference>
<dbReference type="InterPro" id="IPR050416">
    <property type="entry name" value="FAD-linked_Oxidoreductase"/>
</dbReference>
<dbReference type="InterPro" id="IPR006094">
    <property type="entry name" value="Oxid_FAD_bind_N"/>
</dbReference>
<dbReference type="PANTHER" id="PTHR42973">
    <property type="entry name" value="BINDING OXIDOREDUCTASE, PUTATIVE (AFU_ORTHOLOGUE AFUA_1G17690)-RELATED"/>
    <property type="match status" value="1"/>
</dbReference>
<dbReference type="PANTHER" id="PTHR42973:SF53">
    <property type="entry name" value="FAD-BINDING PCMH-TYPE DOMAIN-CONTAINING PROTEIN-RELATED"/>
    <property type="match status" value="1"/>
</dbReference>
<dbReference type="Pfam" id="PF01565">
    <property type="entry name" value="FAD_binding_4"/>
    <property type="match status" value="1"/>
</dbReference>
<dbReference type="SUPFAM" id="SSF56176">
    <property type="entry name" value="FAD-binding/transporter-associated domain-like"/>
    <property type="match status" value="1"/>
</dbReference>
<dbReference type="PROSITE" id="PS51387">
    <property type="entry name" value="FAD_PCMH"/>
    <property type="match status" value="1"/>
</dbReference>
<reference key="1">
    <citation type="journal article" date="2005" name="Nature">
        <title>Sequencing of Aspergillus nidulans and comparative analysis with A. fumigatus and A. oryzae.</title>
        <authorList>
            <person name="Galagan J.E."/>
            <person name="Calvo S.E."/>
            <person name="Cuomo C."/>
            <person name="Ma L.-J."/>
            <person name="Wortman J.R."/>
            <person name="Batzoglou S."/>
            <person name="Lee S.-I."/>
            <person name="Bastuerkmen M."/>
            <person name="Spevak C.C."/>
            <person name="Clutterbuck J."/>
            <person name="Kapitonov V."/>
            <person name="Jurka J."/>
            <person name="Scazzocchio C."/>
            <person name="Farman M.L."/>
            <person name="Butler J."/>
            <person name="Purcell S."/>
            <person name="Harris S."/>
            <person name="Braus G.H."/>
            <person name="Draht O."/>
            <person name="Busch S."/>
            <person name="D'Enfert C."/>
            <person name="Bouchier C."/>
            <person name="Goldman G.H."/>
            <person name="Bell-Pedersen D."/>
            <person name="Griffiths-Jones S."/>
            <person name="Doonan J.H."/>
            <person name="Yu J."/>
            <person name="Vienken K."/>
            <person name="Pain A."/>
            <person name="Freitag M."/>
            <person name="Selker E.U."/>
            <person name="Archer D.B."/>
            <person name="Penalva M.A."/>
            <person name="Oakley B.R."/>
            <person name="Momany M."/>
            <person name="Tanaka T."/>
            <person name="Kumagai T."/>
            <person name="Asai K."/>
            <person name="Machida M."/>
            <person name="Nierman W.C."/>
            <person name="Denning D.W."/>
            <person name="Caddick M.X."/>
            <person name="Hynes M."/>
            <person name="Paoletti M."/>
            <person name="Fischer R."/>
            <person name="Miller B.L."/>
            <person name="Dyer P.S."/>
            <person name="Sachs M.S."/>
            <person name="Osmani S.A."/>
            <person name="Birren B.W."/>
        </authorList>
    </citation>
    <scope>NUCLEOTIDE SEQUENCE [LARGE SCALE GENOMIC DNA]</scope>
    <source>
        <strain>FGSC A4 / ATCC 38163 / CBS 112.46 / NRRL 194 / M139</strain>
    </source>
</reference>
<reference key="2">
    <citation type="journal article" date="2009" name="Fungal Genet. Biol.">
        <title>The 2008 update of the Aspergillus nidulans genome annotation: a community effort.</title>
        <authorList>
            <person name="Wortman J.R."/>
            <person name="Gilsenan J.M."/>
            <person name="Joardar V."/>
            <person name="Deegan J."/>
            <person name="Clutterbuck J."/>
            <person name="Andersen M.R."/>
            <person name="Archer D."/>
            <person name="Bencina M."/>
            <person name="Braus G."/>
            <person name="Coutinho P."/>
            <person name="von Dohren H."/>
            <person name="Doonan J."/>
            <person name="Driessen A.J."/>
            <person name="Durek P."/>
            <person name="Espeso E."/>
            <person name="Fekete E."/>
            <person name="Flipphi M."/>
            <person name="Estrada C.G."/>
            <person name="Geysens S."/>
            <person name="Goldman G."/>
            <person name="de Groot P.W."/>
            <person name="Hansen K."/>
            <person name="Harris S.D."/>
            <person name="Heinekamp T."/>
            <person name="Helmstaedt K."/>
            <person name="Henrissat B."/>
            <person name="Hofmann G."/>
            <person name="Homan T."/>
            <person name="Horio T."/>
            <person name="Horiuchi H."/>
            <person name="James S."/>
            <person name="Jones M."/>
            <person name="Karaffa L."/>
            <person name="Karanyi Z."/>
            <person name="Kato M."/>
            <person name="Keller N."/>
            <person name="Kelly D.E."/>
            <person name="Kiel J.A."/>
            <person name="Kim J.M."/>
            <person name="van der Klei I.J."/>
            <person name="Klis F.M."/>
            <person name="Kovalchuk A."/>
            <person name="Krasevec N."/>
            <person name="Kubicek C.P."/>
            <person name="Liu B."/>
            <person name="Maccabe A."/>
            <person name="Meyer V."/>
            <person name="Mirabito P."/>
            <person name="Miskei M."/>
            <person name="Mos M."/>
            <person name="Mullins J."/>
            <person name="Nelson D.R."/>
            <person name="Nielsen J."/>
            <person name="Oakley B.R."/>
            <person name="Osmani S.A."/>
            <person name="Pakula T."/>
            <person name="Paszewski A."/>
            <person name="Paulsen I."/>
            <person name="Pilsyk S."/>
            <person name="Pocsi I."/>
            <person name="Punt P.J."/>
            <person name="Ram A.F."/>
            <person name="Ren Q."/>
            <person name="Robellet X."/>
            <person name="Robson G."/>
            <person name="Seiboth B."/>
            <person name="van Solingen P."/>
            <person name="Specht T."/>
            <person name="Sun J."/>
            <person name="Taheri-Talesh N."/>
            <person name="Takeshita N."/>
            <person name="Ussery D."/>
            <person name="vanKuyk P.A."/>
            <person name="Visser H."/>
            <person name="van de Vondervoort P.J."/>
            <person name="de Vries R.P."/>
            <person name="Walton J."/>
            <person name="Xiang X."/>
            <person name="Xiong Y."/>
            <person name="Zeng A.P."/>
            <person name="Brandt B.W."/>
            <person name="Cornell M.J."/>
            <person name="van den Hondel C.A."/>
            <person name="Visser J."/>
            <person name="Oliver S.G."/>
            <person name="Turner G."/>
        </authorList>
    </citation>
    <scope>GENOME REANNOTATION</scope>
    <source>
        <strain>FGSC A4 / ATCC 38163 / CBS 112.46 / NRRL 194 / M139</strain>
    </source>
</reference>
<reference key="3">
    <citation type="journal article" date="2019" name="ChemBioChem">
        <title>Discovery and elucidation of the biosynthesis of aspernidgulenes: novel polyenes from Aspergillus nidulans by using serial promoter replacement.</title>
        <authorList>
            <person name="Lin T.S."/>
            <person name="Chen B."/>
            <person name="Chiang Y.M."/>
            <person name="Wang C.C.C."/>
        </authorList>
    </citation>
    <scope>FUNCTION</scope>
    <scope>CATALYTIC ACTIVITY</scope>
    <scope>PATHWAY</scope>
</reference>
<keyword id="KW-0274">FAD</keyword>
<keyword id="KW-0285">Flavoprotein</keyword>
<keyword id="KW-0560">Oxidoreductase</keyword>
<keyword id="KW-1185">Reference proteome</keyword>
<organism>
    <name type="scientific">Emericella nidulans (strain FGSC A4 / ATCC 38163 / CBS 112.46 / NRRL 194 / M139)</name>
    <name type="common">Aspergillus nidulans</name>
    <dbReference type="NCBI Taxonomy" id="227321"/>
    <lineage>
        <taxon>Eukaryota</taxon>
        <taxon>Fungi</taxon>
        <taxon>Dikarya</taxon>
        <taxon>Ascomycota</taxon>
        <taxon>Pezizomycotina</taxon>
        <taxon>Eurotiomycetes</taxon>
        <taxon>Eurotiomycetidae</taxon>
        <taxon>Eurotiales</taxon>
        <taxon>Aspergillaceae</taxon>
        <taxon>Aspergillus</taxon>
        <taxon>Aspergillus subgen. Nidulantes</taxon>
    </lineage>
</organism>